<gene>
    <name evidence="1" type="primary">aaeB</name>
    <name type="ordered locus">SNSL254_A3627</name>
</gene>
<dbReference type="EMBL" id="CP001113">
    <property type="protein sequence ID" value="ACF64855.1"/>
    <property type="molecule type" value="Genomic_DNA"/>
</dbReference>
<dbReference type="RefSeq" id="WP_000510913.1">
    <property type="nucleotide sequence ID" value="NZ_CCMR01000001.1"/>
</dbReference>
<dbReference type="SMR" id="B4T774"/>
<dbReference type="KEGG" id="see:SNSL254_A3627"/>
<dbReference type="HOGENOM" id="CLU_027647_0_0_6"/>
<dbReference type="Proteomes" id="UP000008824">
    <property type="component" value="Chromosome"/>
</dbReference>
<dbReference type="GO" id="GO:0005886">
    <property type="term" value="C:plasma membrane"/>
    <property type="evidence" value="ECO:0007669"/>
    <property type="project" value="UniProtKB-SubCell"/>
</dbReference>
<dbReference type="GO" id="GO:0022857">
    <property type="term" value="F:transmembrane transporter activity"/>
    <property type="evidence" value="ECO:0007669"/>
    <property type="project" value="UniProtKB-UniRule"/>
</dbReference>
<dbReference type="GO" id="GO:0046942">
    <property type="term" value="P:carboxylic acid transport"/>
    <property type="evidence" value="ECO:0007669"/>
    <property type="project" value="InterPro"/>
</dbReference>
<dbReference type="HAMAP" id="MF_01545">
    <property type="entry name" value="AaeB"/>
    <property type="match status" value="1"/>
</dbReference>
<dbReference type="InterPro" id="IPR006726">
    <property type="entry name" value="PHBA_efflux_AaeB/fusaric-R"/>
</dbReference>
<dbReference type="InterPro" id="IPR023706">
    <property type="entry name" value="PHBA_efflux_pump_AaeB"/>
</dbReference>
<dbReference type="NCBIfam" id="NF007916">
    <property type="entry name" value="PRK10631.1"/>
    <property type="match status" value="1"/>
</dbReference>
<dbReference type="PANTHER" id="PTHR30509:SF9">
    <property type="entry name" value="MULTIDRUG RESISTANCE PROTEIN MDTO"/>
    <property type="match status" value="1"/>
</dbReference>
<dbReference type="PANTHER" id="PTHR30509">
    <property type="entry name" value="P-HYDROXYBENZOIC ACID EFFLUX PUMP SUBUNIT-RELATED"/>
    <property type="match status" value="1"/>
</dbReference>
<dbReference type="Pfam" id="PF04632">
    <property type="entry name" value="FUSC"/>
    <property type="match status" value="1"/>
</dbReference>
<sequence>MGIFSIANQHIRFAVKLACAIVLALFIGFHFQLETPRWAVLTAAIVAAGPAFAAGGEPYSGAIRYRGMLRIIGTFIGCIAALIIIISMIRAPLLMILVCCVWAGFCTWISSLVRIENSYAWGLSGYTALIIVITIQTEPLLTPQFALERCSEIVIGIGCAILADLLFSPRSIKQEVDRELDSLLVAQYQLMQLCIKHGDSEEVDNAWGDLVRRTAALEGMRSNLNMESSRWVRANRRLKALNTLSLTLITQSCETYLIQNTRPELITDTFRELFETPVETVQDVHRQLKRMRRVIVWTGERETPVTLYSWVGAATRYLLLKRGVISNTKISATEEEILQGEPVVKVESAERHHAMVNFWRTTLSCILGTLFWLWTGWTSGNGAMVMIAVVTSLAMRLPNPRMVCIDFIYGTLAALPLGLLYFLVIIPNTQQSMLLLCLSLAVLGFFIGIEVQKRRLGSMGALASTINIIVLDNPMTFHFSQFLDSALGQIVGCMLAFIVILLVRDKSKDRTGRVLLNQFVSAAVSAMTTNVVRRKENRLPALYQQLFLLMNKFPGDLPKFRLALTMIIAHQRLRDAPIPVNEDLSVFHRQLRRTADHVISAGSDDKRRRYFGQLLDELDIYQEKLRIWEAPPQVTEPVKRLTGMLHKYQNALTDS</sequence>
<feature type="chain" id="PRO_1000146745" description="p-hydroxybenzoic acid efflux pump subunit AaeB">
    <location>
        <begin position="1"/>
        <end position="655"/>
    </location>
</feature>
<feature type="transmembrane region" description="Helical" evidence="1">
    <location>
        <begin position="13"/>
        <end position="33"/>
    </location>
</feature>
<feature type="transmembrane region" description="Helical" evidence="1">
    <location>
        <begin position="38"/>
        <end position="58"/>
    </location>
</feature>
<feature type="transmembrane region" description="Helical" evidence="1">
    <location>
        <begin position="69"/>
        <end position="89"/>
    </location>
</feature>
<feature type="transmembrane region" description="Helical" evidence="1">
    <location>
        <begin position="93"/>
        <end position="113"/>
    </location>
</feature>
<feature type="transmembrane region" description="Helical" evidence="1">
    <location>
        <begin position="121"/>
        <end position="141"/>
    </location>
</feature>
<feature type="transmembrane region" description="Helical" evidence="1">
    <location>
        <begin position="152"/>
        <end position="172"/>
    </location>
</feature>
<feature type="transmembrane region" description="Helical" evidence="1">
    <location>
        <begin position="370"/>
        <end position="390"/>
    </location>
</feature>
<feature type="transmembrane region" description="Helical" evidence="1">
    <location>
        <begin position="407"/>
        <end position="427"/>
    </location>
</feature>
<feature type="transmembrane region" description="Helical" evidence="1">
    <location>
        <begin position="431"/>
        <end position="451"/>
    </location>
</feature>
<feature type="transmembrane region" description="Helical" evidence="1">
    <location>
        <begin position="459"/>
        <end position="479"/>
    </location>
</feature>
<feature type="transmembrane region" description="Helical" evidence="1">
    <location>
        <begin position="482"/>
        <end position="502"/>
    </location>
</feature>
<proteinExistence type="inferred from homology"/>
<accession>B4T774</accession>
<name>AAEB_SALNS</name>
<comment type="function">
    <text evidence="1">Forms an efflux pump with AaeA. Could function as a metabolic relief valve, allowing to eliminate certain compounds when they accumulate to high levels in the cell.</text>
</comment>
<comment type="subcellular location">
    <subcellularLocation>
        <location evidence="1">Cell inner membrane</location>
        <topology evidence="1">Multi-pass membrane protein</topology>
    </subcellularLocation>
</comment>
<comment type="similarity">
    <text evidence="1">Belongs to the aromatic acid exporter ArAE (TC 2.A.85) family.</text>
</comment>
<reference key="1">
    <citation type="journal article" date="2011" name="J. Bacteriol.">
        <title>Comparative genomics of 28 Salmonella enterica isolates: evidence for CRISPR-mediated adaptive sublineage evolution.</title>
        <authorList>
            <person name="Fricke W.F."/>
            <person name="Mammel M.K."/>
            <person name="McDermott P.F."/>
            <person name="Tartera C."/>
            <person name="White D.G."/>
            <person name="Leclerc J.E."/>
            <person name="Ravel J."/>
            <person name="Cebula T.A."/>
        </authorList>
    </citation>
    <scope>NUCLEOTIDE SEQUENCE [LARGE SCALE GENOMIC DNA]</scope>
    <source>
        <strain>SL254</strain>
    </source>
</reference>
<protein>
    <recommendedName>
        <fullName evidence="1">p-hydroxybenzoic acid efflux pump subunit AaeB</fullName>
        <shortName evidence="1">pHBA efflux pump protein B</shortName>
    </recommendedName>
</protein>
<evidence type="ECO:0000255" key="1">
    <source>
        <dbReference type="HAMAP-Rule" id="MF_01545"/>
    </source>
</evidence>
<keyword id="KW-0997">Cell inner membrane</keyword>
<keyword id="KW-1003">Cell membrane</keyword>
<keyword id="KW-0472">Membrane</keyword>
<keyword id="KW-0812">Transmembrane</keyword>
<keyword id="KW-1133">Transmembrane helix</keyword>
<keyword id="KW-0813">Transport</keyword>
<organism>
    <name type="scientific">Salmonella newport (strain SL254)</name>
    <dbReference type="NCBI Taxonomy" id="423368"/>
    <lineage>
        <taxon>Bacteria</taxon>
        <taxon>Pseudomonadati</taxon>
        <taxon>Pseudomonadota</taxon>
        <taxon>Gammaproteobacteria</taxon>
        <taxon>Enterobacterales</taxon>
        <taxon>Enterobacteriaceae</taxon>
        <taxon>Salmonella</taxon>
    </lineage>
</organism>